<name>RL28_RAT</name>
<reference key="1">
    <citation type="journal article" date="1990" name="Biochim. Biophys. Acta">
        <title>The primary structure of rat ribosomal proteins: the amino acid sequences of L27a and L28 and corrections in the sequences of S4 and S12.</title>
        <authorList>
            <person name="Wool I.G."/>
            <person name="Chan Y.-L."/>
            <person name="Paz V."/>
            <person name="Olvera J."/>
        </authorList>
    </citation>
    <scope>NUCLEOTIDE SEQUENCE [MRNA]</scope>
    <scope>PARTIAL PROTEIN SEQUENCE</scope>
    <source>
        <strain>Sprague-Dawley</strain>
        <tissue>Liver</tissue>
    </source>
</reference>
<gene>
    <name type="primary">Rpl28</name>
</gene>
<keyword id="KW-0007">Acetylation</keyword>
<keyword id="KW-0963">Cytoplasm</keyword>
<keyword id="KW-0903">Direct protein sequencing</keyword>
<keyword id="KW-1017">Isopeptide bond</keyword>
<keyword id="KW-0597">Phosphoprotein</keyword>
<keyword id="KW-1185">Reference proteome</keyword>
<keyword id="KW-0687">Ribonucleoprotein</keyword>
<keyword id="KW-0689">Ribosomal protein</keyword>
<keyword id="KW-0832">Ubl conjugation</keyword>
<feature type="initiator methionine" description="Removed" evidence="1">
    <location>
        <position position="1"/>
    </location>
</feature>
<feature type="chain" id="PRO_0000122391" description="Large ribosomal subunit protein eL28">
    <location>
        <begin position="2"/>
        <end position="137"/>
    </location>
</feature>
<feature type="modified residue" description="N-acetylserine" evidence="1">
    <location>
        <position position="2"/>
    </location>
</feature>
<feature type="modified residue" description="Phosphoserine" evidence="1">
    <location>
        <position position="115"/>
    </location>
</feature>
<feature type="cross-link" description="Glycyl lysine isopeptide (Lys-Gly) (interchain with G-Cter in SUMO2)" evidence="1">
    <location>
        <position position="58"/>
    </location>
</feature>
<feature type="cross-link" description="Glycyl lysine isopeptide (Lys-Gly) (interchain with G-Cter in SUMO2)" evidence="1">
    <location>
        <position position="65"/>
    </location>
</feature>
<dbReference type="EMBL" id="X52619">
    <property type="protein sequence ID" value="CAA36846.1"/>
    <property type="molecule type" value="mRNA"/>
</dbReference>
<dbReference type="PIR" id="S13072">
    <property type="entry name" value="R5RT28"/>
</dbReference>
<dbReference type="SMR" id="P17702"/>
<dbReference type="FunCoup" id="P17702">
    <property type="interactions" value="786"/>
</dbReference>
<dbReference type="IntAct" id="P17702">
    <property type="interactions" value="3"/>
</dbReference>
<dbReference type="MINT" id="P17702"/>
<dbReference type="STRING" id="10116.ENSRNOP00000055726"/>
<dbReference type="iPTMnet" id="P17702"/>
<dbReference type="PhosphoSitePlus" id="P17702"/>
<dbReference type="PaxDb" id="10116-ENSRNOP00000055726"/>
<dbReference type="UCSC" id="RGD:621193">
    <property type="organism name" value="rat"/>
</dbReference>
<dbReference type="AGR" id="RGD:621193"/>
<dbReference type="RGD" id="621193">
    <property type="gene designation" value="Rpl28"/>
</dbReference>
<dbReference type="eggNOG" id="KOG3412">
    <property type="taxonomic scope" value="Eukaryota"/>
</dbReference>
<dbReference type="InParanoid" id="P17702"/>
<dbReference type="PhylomeDB" id="P17702"/>
<dbReference type="Reactome" id="R-RNO-156827">
    <property type="pathway name" value="L13a-mediated translational silencing of Ceruloplasmin expression"/>
</dbReference>
<dbReference type="Reactome" id="R-RNO-1799339">
    <property type="pathway name" value="SRP-dependent cotranslational protein targeting to membrane"/>
</dbReference>
<dbReference type="Reactome" id="R-RNO-6791226">
    <property type="pathway name" value="Major pathway of rRNA processing in the nucleolus and cytosol"/>
</dbReference>
<dbReference type="Reactome" id="R-RNO-72689">
    <property type="pathway name" value="Formation of a pool of free 40S subunits"/>
</dbReference>
<dbReference type="Reactome" id="R-RNO-72706">
    <property type="pathway name" value="GTP hydrolysis and joining of the 60S ribosomal subunit"/>
</dbReference>
<dbReference type="Reactome" id="R-RNO-975956">
    <property type="pathway name" value="Nonsense Mediated Decay (NMD) independent of the Exon Junction Complex (EJC)"/>
</dbReference>
<dbReference type="Reactome" id="R-RNO-975957">
    <property type="pathway name" value="Nonsense Mediated Decay (NMD) enhanced by the Exon Junction Complex (EJC)"/>
</dbReference>
<dbReference type="PRO" id="PR:P17702"/>
<dbReference type="Proteomes" id="UP000002494">
    <property type="component" value="Unplaced"/>
</dbReference>
<dbReference type="GO" id="GO:0044297">
    <property type="term" value="C:cell body"/>
    <property type="evidence" value="ECO:0000266"/>
    <property type="project" value="RGD"/>
</dbReference>
<dbReference type="GO" id="GO:0005737">
    <property type="term" value="C:cytoplasm"/>
    <property type="evidence" value="ECO:0000266"/>
    <property type="project" value="RGD"/>
</dbReference>
<dbReference type="GO" id="GO:0036464">
    <property type="term" value="C:cytoplasmic ribonucleoprotein granule"/>
    <property type="evidence" value="ECO:0000266"/>
    <property type="project" value="RGD"/>
</dbReference>
<dbReference type="GO" id="GO:0022625">
    <property type="term" value="C:cytosolic large ribosomal subunit"/>
    <property type="evidence" value="ECO:0000314"/>
    <property type="project" value="RGD"/>
</dbReference>
<dbReference type="GO" id="GO:0022626">
    <property type="term" value="C:cytosolic ribosome"/>
    <property type="evidence" value="ECO:0000266"/>
    <property type="project" value="RGD"/>
</dbReference>
<dbReference type="GO" id="GO:0030425">
    <property type="term" value="C:dendrite"/>
    <property type="evidence" value="ECO:0000266"/>
    <property type="project" value="RGD"/>
</dbReference>
<dbReference type="GO" id="GO:0045202">
    <property type="term" value="C:synapse"/>
    <property type="evidence" value="ECO:0000266"/>
    <property type="project" value="RGD"/>
</dbReference>
<dbReference type="GO" id="GO:0003735">
    <property type="term" value="F:structural constituent of ribosome"/>
    <property type="evidence" value="ECO:0000266"/>
    <property type="project" value="RGD"/>
</dbReference>
<dbReference type="GO" id="GO:0006412">
    <property type="term" value="P:translation"/>
    <property type="evidence" value="ECO:0007669"/>
    <property type="project" value="InterPro"/>
</dbReference>
<dbReference type="FunFam" id="3.30.390.110:FF:000002">
    <property type="entry name" value="60S ribosomal protein L28"/>
    <property type="match status" value="1"/>
</dbReference>
<dbReference type="Gene3D" id="3.30.390.110">
    <property type="match status" value="1"/>
</dbReference>
<dbReference type="InterPro" id="IPR002672">
    <property type="entry name" value="Ribosomal_eL28"/>
</dbReference>
<dbReference type="InterPro" id="IPR029004">
    <property type="entry name" value="Ribosomal_eL28/Mak16"/>
</dbReference>
<dbReference type="PANTHER" id="PTHR10544">
    <property type="entry name" value="60S RIBOSOMAL PROTEIN L28"/>
    <property type="match status" value="1"/>
</dbReference>
<dbReference type="Pfam" id="PF01778">
    <property type="entry name" value="Ribosomal_L28e"/>
    <property type="match status" value="1"/>
</dbReference>
<organism>
    <name type="scientific">Rattus norvegicus</name>
    <name type="common">Rat</name>
    <dbReference type="NCBI Taxonomy" id="10116"/>
    <lineage>
        <taxon>Eukaryota</taxon>
        <taxon>Metazoa</taxon>
        <taxon>Chordata</taxon>
        <taxon>Craniata</taxon>
        <taxon>Vertebrata</taxon>
        <taxon>Euteleostomi</taxon>
        <taxon>Mammalia</taxon>
        <taxon>Eutheria</taxon>
        <taxon>Euarchontoglires</taxon>
        <taxon>Glires</taxon>
        <taxon>Rodentia</taxon>
        <taxon>Myomorpha</taxon>
        <taxon>Muroidea</taxon>
        <taxon>Muridae</taxon>
        <taxon>Murinae</taxon>
        <taxon>Rattus</taxon>
    </lineage>
</organism>
<accession>P17702</accession>
<evidence type="ECO:0000250" key="1">
    <source>
        <dbReference type="UniProtKB" id="P46779"/>
    </source>
</evidence>
<evidence type="ECO:0000305" key="2"/>
<proteinExistence type="evidence at protein level"/>
<protein>
    <recommendedName>
        <fullName evidence="2">Large ribosomal subunit protein eL28</fullName>
    </recommendedName>
    <alternativeName>
        <fullName>60S ribosomal protein L28</fullName>
    </alternativeName>
</protein>
<sequence>MSAHLQWMVVRNCSSFLIKRNKQTYSTEPNNLKARNSFRYNGLIHRKTVGVEAWPDGKGVVVVMKRRSGQRKPATSYVRTTINKNARATLSSIRHMIRKNKYRPDLRMAAIRRASAILRSQKPVVVKRKRTRPTKSS</sequence>
<comment type="function">
    <text evidence="1">Component of the large ribosomal subunit. The ribosome is a large ribonucleoprotein complex responsible for the synthesis of proteins in the cell.</text>
</comment>
<comment type="subunit">
    <text evidence="1">Component of the large ribosomal subunit.</text>
</comment>
<comment type="subcellular location">
    <subcellularLocation>
        <location evidence="1">Cytoplasm</location>
    </subcellularLocation>
</comment>
<comment type="similarity">
    <text evidence="2">Belongs to the eukaryotic ribosomal protein eL28 family.</text>
</comment>